<sequence length="523" mass="59136">MELTLWTYEGPPHVGAMRIASSMKDIHYVLHAPQGDTYADLLFTMIERRGQRPPVTYTTFQARDLGGDTAELVKKNIKEAVERFKPKTLLVGESCTAELIQDQPGALAKGMGFDMPIVNLELPAYSKKENWGASETFYQLTRTLLKDKVSFSDKISPFRWKELGRRPKVNILGPSLLGFRCRDDVIEIQRILSEQGIDTNVVAPLGASPDDIERLIDAEINICLYQEIAEASCEWLKRNFGMEYTNTIPIGIKNTIEFINEVHEKLDLPLTNKEELENKSKLPWYSKSVDSNYLTGKRVFIFGDGTHAIAAAKIAKEELGFEVVGLGTYSREMARQVRATAKDLNVEALITNNYLEVEDAMKKAAPELVLGTQMERHSAKRLGIPCSVISTPMHVQDVPARYSPQMGWEGANVIFDDWVHPLMMGLEEHLIDMFKHDFEFVDGHQSHLGHTATNKNNILNSDEKKEKNSKEEIIWTESGRAELTKVPFFVRGKVKTNTEKYAILRGIPEISDETLYDAKAYFS</sequence>
<evidence type="ECO:0000255" key="1">
    <source>
        <dbReference type="HAMAP-Rule" id="MF_00353"/>
    </source>
</evidence>
<keyword id="KW-0004">4Fe-4S</keyword>
<keyword id="KW-0067">ATP-binding</keyword>
<keyword id="KW-0149">Chlorophyll biosynthesis</keyword>
<keyword id="KW-0408">Iron</keyword>
<keyword id="KW-0411">Iron-sulfur</keyword>
<keyword id="KW-0479">Metal-binding</keyword>
<keyword id="KW-0547">Nucleotide-binding</keyword>
<keyword id="KW-0560">Oxidoreductase</keyword>
<keyword id="KW-0602">Photosynthesis</keyword>
<keyword id="KW-1185">Reference proteome</keyword>
<proteinExistence type="inferred from homology"/>
<organism>
    <name type="scientific">Prochlorococcus marinus (strain MIT 9301)</name>
    <dbReference type="NCBI Taxonomy" id="167546"/>
    <lineage>
        <taxon>Bacteria</taxon>
        <taxon>Bacillati</taxon>
        <taxon>Cyanobacteriota</taxon>
        <taxon>Cyanophyceae</taxon>
        <taxon>Synechococcales</taxon>
        <taxon>Prochlorococcaceae</taxon>
        <taxon>Prochlorococcus</taxon>
    </lineage>
</organism>
<dbReference type="EC" id="1.3.7.7" evidence="1"/>
<dbReference type="EMBL" id="CP000576">
    <property type="protein sequence ID" value="ABO17193.1"/>
    <property type="molecule type" value="Genomic_DNA"/>
</dbReference>
<dbReference type="RefSeq" id="WP_011862563.1">
    <property type="nucleotide sequence ID" value="NC_009091.1"/>
</dbReference>
<dbReference type="SMR" id="A3PBR8"/>
<dbReference type="STRING" id="167546.P9301_05701"/>
<dbReference type="KEGG" id="pmg:P9301_05701"/>
<dbReference type="eggNOG" id="COG2710">
    <property type="taxonomic scope" value="Bacteria"/>
</dbReference>
<dbReference type="HOGENOM" id="CLU_025470_0_0_3"/>
<dbReference type="OrthoDB" id="5717231at2"/>
<dbReference type="UniPathway" id="UPA00670"/>
<dbReference type="Proteomes" id="UP000001430">
    <property type="component" value="Chromosome"/>
</dbReference>
<dbReference type="GO" id="GO:0051539">
    <property type="term" value="F:4 iron, 4 sulfur cluster binding"/>
    <property type="evidence" value="ECO:0007669"/>
    <property type="project" value="UniProtKB-UniRule"/>
</dbReference>
<dbReference type="GO" id="GO:0005524">
    <property type="term" value="F:ATP binding"/>
    <property type="evidence" value="ECO:0007669"/>
    <property type="project" value="UniProtKB-UniRule"/>
</dbReference>
<dbReference type="GO" id="GO:0046872">
    <property type="term" value="F:metal ion binding"/>
    <property type="evidence" value="ECO:0007669"/>
    <property type="project" value="UniProtKB-KW"/>
</dbReference>
<dbReference type="GO" id="GO:0016730">
    <property type="term" value="F:oxidoreductase activity, acting on iron-sulfur proteins as donors"/>
    <property type="evidence" value="ECO:0007669"/>
    <property type="project" value="InterPro"/>
</dbReference>
<dbReference type="GO" id="GO:0016636">
    <property type="term" value="F:oxidoreductase activity, acting on the CH-CH group of donors, iron-sulfur protein as acceptor"/>
    <property type="evidence" value="ECO:0007669"/>
    <property type="project" value="UniProtKB-UniRule"/>
</dbReference>
<dbReference type="GO" id="GO:0036068">
    <property type="term" value="P:light-independent chlorophyll biosynthetic process"/>
    <property type="evidence" value="ECO:0007669"/>
    <property type="project" value="UniProtKB-UniRule"/>
</dbReference>
<dbReference type="GO" id="GO:0019685">
    <property type="term" value="P:photosynthesis, dark reaction"/>
    <property type="evidence" value="ECO:0007669"/>
    <property type="project" value="InterPro"/>
</dbReference>
<dbReference type="Gene3D" id="1.20.89.20">
    <property type="match status" value="1"/>
</dbReference>
<dbReference type="Gene3D" id="3.40.50.1980">
    <property type="entry name" value="Nitrogenase molybdenum iron protein domain"/>
    <property type="match status" value="3"/>
</dbReference>
<dbReference type="Gene3D" id="1.10.8.550">
    <property type="entry name" value="Proto-chlorophyllide reductase 57 kD subunit B"/>
    <property type="match status" value="1"/>
</dbReference>
<dbReference type="HAMAP" id="MF_00353">
    <property type="entry name" value="ChlB_BchB"/>
    <property type="match status" value="1"/>
</dbReference>
<dbReference type="InterPro" id="IPR050152">
    <property type="entry name" value="ChlB/BchB/BchZ"/>
</dbReference>
<dbReference type="InterPro" id="IPR013580">
    <property type="entry name" value="LI-POR_suB-like_C"/>
</dbReference>
<dbReference type="InterPro" id="IPR000510">
    <property type="entry name" value="Nase/OxRdtase_comp1"/>
</dbReference>
<dbReference type="InterPro" id="IPR042298">
    <property type="entry name" value="P-CP_red_C"/>
</dbReference>
<dbReference type="InterPro" id="IPR005969">
    <property type="entry name" value="Protochl_reductB"/>
</dbReference>
<dbReference type="InterPro" id="IPR016209">
    <property type="entry name" value="Protochlorophyllide_Rdtase"/>
</dbReference>
<dbReference type="NCBIfam" id="TIGR01278">
    <property type="entry name" value="DPOR_BchB"/>
    <property type="match status" value="1"/>
</dbReference>
<dbReference type="NCBIfam" id="NF002790">
    <property type="entry name" value="PRK02910.1-4"/>
    <property type="match status" value="1"/>
</dbReference>
<dbReference type="PANTHER" id="PTHR33712">
    <property type="entry name" value="LIGHT-INDEPENDENT PROTOCHLOROPHYLLIDE REDUCTASE SUBUNIT B"/>
    <property type="match status" value="1"/>
</dbReference>
<dbReference type="PANTHER" id="PTHR33712:SF7">
    <property type="entry name" value="LIGHT-INDEPENDENT PROTOCHLOROPHYLLIDE REDUCTASE SUBUNIT B"/>
    <property type="match status" value="1"/>
</dbReference>
<dbReference type="Pfam" id="PF00148">
    <property type="entry name" value="Oxidored_nitro"/>
    <property type="match status" value="1"/>
</dbReference>
<dbReference type="Pfam" id="PF08369">
    <property type="entry name" value="PCP_red"/>
    <property type="match status" value="1"/>
</dbReference>
<dbReference type="PIRSF" id="PIRSF000163">
    <property type="entry name" value="PCP_ChlB"/>
    <property type="match status" value="1"/>
</dbReference>
<dbReference type="SUPFAM" id="SSF53807">
    <property type="entry name" value="Helical backbone' metal receptor"/>
    <property type="match status" value="1"/>
</dbReference>
<accession>A3PBR8</accession>
<name>CHLB_PROM0</name>
<gene>
    <name evidence="1" type="primary">chlB</name>
    <name type="ordered locus">P9301_05701</name>
</gene>
<feature type="chain" id="PRO_1000048406" description="Light-independent protochlorophyllide reductase subunit B">
    <location>
        <begin position="1"/>
        <end position="523"/>
    </location>
</feature>
<feature type="active site" description="Proton donor" evidence="1">
    <location>
        <position position="290"/>
    </location>
</feature>
<feature type="binding site" evidence="1">
    <location>
        <position position="36"/>
    </location>
    <ligand>
        <name>[4Fe-4S] cluster</name>
        <dbReference type="ChEBI" id="CHEBI:49883"/>
        <note>ligand shared with heterodimeric partner</note>
    </ligand>
</feature>
<feature type="binding site" evidence="1">
    <location>
        <begin position="425"/>
        <end position="426"/>
    </location>
    <ligand>
        <name>substrate</name>
    </ligand>
</feature>
<comment type="function">
    <text evidence="1">Component of the dark-operative protochlorophyllide reductase (DPOR) that uses Mg-ATP and reduced ferredoxin to reduce ring D of protochlorophyllide (Pchlide) to form chlorophyllide a (Chlide). This reaction is light-independent. The NB-protein (ChlN-ChlB) is the catalytic component of the complex.</text>
</comment>
<comment type="catalytic activity">
    <reaction evidence="1">
        <text>chlorophyllide a + oxidized 2[4Fe-4S]-[ferredoxin] + 2 ADP + 2 phosphate = protochlorophyllide a + reduced 2[4Fe-4S]-[ferredoxin] + 2 ATP + 2 H2O</text>
        <dbReference type="Rhea" id="RHEA:28202"/>
        <dbReference type="Rhea" id="RHEA-COMP:10002"/>
        <dbReference type="Rhea" id="RHEA-COMP:10004"/>
        <dbReference type="ChEBI" id="CHEBI:15377"/>
        <dbReference type="ChEBI" id="CHEBI:30616"/>
        <dbReference type="ChEBI" id="CHEBI:33722"/>
        <dbReference type="ChEBI" id="CHEBI:33723"/>
        <dbReference type="ChEBI" id="CHEBI:43474"/>
        <dbReference type="ChEBI" id="CHEBI:83348"/>
        <dbReference type="ChEBI" id="CHEBI:83350"/>
        <dbReference type="ChEBI" id="CHEBI:456216"/>
        <dbReference type="EC" id="1.3.7.7"/>
    </reaction>
</comment>
<comment type="cofactor">
    <cofactor evidence="1">
        <name>[4Fe-4S] cluster</name>
        <dbReference type="ChEBI" id="CHEBI:49883"/>
    </cofactor>
    <text evidence="1">Binds 1 [4Fe-4S] cluster per heterodimer. The cluster is bound at the heterodimer interface by residues from both subunits.</text>
</comment>
<comment type="pathway">
    <text evidence="1">Porphyrin-containing compound metabolism; chlorophyll biosynthesis (light-independent).</text>
</comment>
<comment type="subunit">
    <text evidence="1">Protochlorophyllide reductase is composed of three subunits; ChlL, ChlN and ChlB. Forms a heterotetramer of two ChlB and two ChlN subunits.</text>
</comment>
<comment type="similarity">
    <text evidence="1">Belongs to the ChlB/BchB/BchZ family.</text>
</comment>
<reference key="1">
    <citation type="journal article" date="2007" name="PLoS Genet.">
        <title>Patterns and implications of gene gain and loss in the evolution of Prochlorococcus.</title>
        <authorList>
            <person name="Kettler G.C."/>
            <person name="Martiny A.C."/>
            <person name="Huang K."/>
            <person name="Zucker J."/>
            <person name="Coleman M.L."/>
            <person name="Rodrigue S."/>
            <person name="Chen F."/>
            <person name="Lapidus A."/>
            <person name="Ferriera S."/>
            <person name="Johnson J."/>
            <person name="Steglich C."/>
            <person name="Church G.M."/>
            <person name="Richardson P."/>
            <person name="Chisholm S.W."/>
        </authorList>
    </citation>
    <scope>NUCLEOTIDE SEQUENCE [LARGE SCALE GENOMIC DNA]</scope>
    <source>
        <strain>MIT 9301</strain>
    </source>
</reference>
<protein>
    <recommendedName>
        <fullName evidence="1">Light-independent protochlorophyllide reductase subunit B</fullName>
        <shortName evidence="1">DPOR subunit B</shortName>
        <shortName evidence="1">LI-POR subunit B</shortName>
        <ecNumber evidence="1">1.3.7.7</ecNumber>
    </recommendedName>
</protein>